<sequence length="472" mass="51235">MNIDSIVRELIGQASGITADSRSVKPGFIFVCLSEAAKGFVPDAVKAGAKFIVAGNAGGLPHVDHSQIIICPMQHDLYYKLASEFYHASQPEFVAVVTGTNGKTSVADFCRQIWCLTGHTGASMGTLGAIVGNTTLPSSTSFTTPDAVELHKTLSTLRDLQVKYLCMEASSHGMAQKRLYGVKASAAAFTNLSGDHLDYHGSMEKYWATKQKLFSEVLSCEGCAVLNADSEQYGELRELAAGRNIITYGVDTGDVKLARLERNTQGHNITVKVCGEVIYDGAFPVLGKFQISNLLCALAIVAASGSGHRDVPIDRLASPRGRMELIGDRIIIDYAHTSDALKHALTSLKWHGFPQKTVLVFGCGGDRDREKRKTMGMVASQYADVVIVTDDNPRSENPETIRKEIMLHCENAIEIPDRGDAIHYAVNFAIRNNYVLLIAGKGHETTQQIAGKSVEFNDGTAVRRCLSEMQYA</sequence>
<reference key="1">
    <citation type="journal article" date="2005" name="Proc. Natl. Acad. Sci. U.S.A.">
        <title>Complete genome sequencing of Anaplasma marginale reveals that the surface is skewed to two superfamilies of outer membrane proteins.</title>
        <authorList>
            <person name="Brayton K.A."/>
            <person name="Kappmeyer L.S."/>
            <person name="Herndon D.R."/>
            <person name="Dark M.J."/>
            <person name="Tibbals D.L."/>
            <person name="Palmer G.H."/>
            <person name="McGuire T.C."/>
            <person name="Knowles D.P. Jr."/>
        </authorList>
    </citation>
    <scope>NUCLEOTIDE SEQUENCE [LARGE SCALE GENOMIC DNA]</scope>
    <source>
        <strain>St. Maries</strain>
    </source>
</reference>
<proteinExistence type="inferred from homology"/>
<evidence type="ECO:0000255" key="1">
    <source>
        <dbReference type="HAMAP-Rule" id="MF_00208"/>
    </source>
</evidence>
<name>MURE_ANAMM</name>
<keyword id="KW-0067">ATP-binding</keyword>
<keyword id="KW-0131">Cell cycle</keyword>
<keyword id="KW-0132">Cell division</keyword>
<keyword id="KW-0133">Cell shape</keyword>
<keyword id="KW-0961">Cell wall biogenesis/degradation</keyword>
<keyword id="KW-0963">Cytoplasm</keyword>
<keyword id="KW-0436">Ligase</keyword>
<keyword id="KW-0460">Magnesium</keyword>
<keyword id="KW-0547">Nucleotide-binding</keyword>
<keyword id="KW-0573">Peptidoglycan synthesis</keyword>
<dbReference type="EC" id="6.3.2.13" evidence="1"/>
<dbReference type="EMBL" id="CP000030">
    <property type="protein sequence ID" value="AAV86378.1"/>
    <property type="molecule type" value="Genomic_DNA"/>
</dbReference>
<dbReference type="RefSeq" id="WP_011114195.1">
    <property type="nucleotide sequence ID" value="NC_004842.2"/>
</dbReference>
<dbReference type="SMR" id="Q5PBF1"/>
<dbReference type="KEGG" id="ama:AM282"/>
<dbReference type="HOGENOM" id="CLU_022291_3_1_5"/>
<dbReference type="UniPathway" id="UPA00219"/>
<dbReference type="GO" id="GO:0005737">
    <property type="term" value="C:cytoplasm"/>
    <property type="evidence" value="ECO:0007669"/>
    <property type="project" value="UniProtKB-SubCell"/>
</dbReference>
<dbReference type="GO" id="GO:0005524">
    <property type="term" value="F:ATP binding"/>
    <property type="evidence" value="ECO:0007669"/>
    <property type="project" value="UniProtKB-UniRule"/>
</dbReference>
<dbReference type="GO" id="GO:0000287">
    <property type="term" value="F:magnesium ion binding"/>
    <property type="evidence" value="ECO:0007669"/>
    <property type="project" value="UniProtKB-UniRule"/>
</dbReference>
<dbReference type="GO" id="GO:0008765">
    <property type="term" value="F:UDP-N-acetylmuramoylalanyl-D-glutamate-2,6-diaminopimelate ligase activity"/>
    <property type="evidence" value="ECO:0007669"/>
    <property type="project" value="UniProtKB-UniRule"/>
</dbReference>
<dbReference type="GO" id="GO:0051301">
    <property type="term" value="P:cell division"/>
    <property type="evidence" value="ECO:0007669"/>
    <property type="project" value="UniProtKB-KW"/>
</dbReference>
<dbReference type="GO" id="GO:0071555">
    <property type="term" value="P:cell wall organization"/>
    <property type="evidence" value="ECO:0007669"/>
    <property type="project" value="UniProtKB-KW"/>
</dbReference>
<dbReference type="GO" id="GO:0009252">
    <property type="term" value="P:peptidoglycan biosynthetic process"/>
    <property type="evidence" value="ECO:0007669"/>
    <property type="project" value="UniProtKB-UniRule"/>
</dbReference>
<dbReference type="GO" id="GO:0008360">
    <property type="term" value="P:regulation of cell shape"/>
    <property type="evidence" value="ECO:0007669"/>
    <property type="project" value="UniProtKB-KW"/>
</dbReference>
<dbReference type="Gene3D" id="3.90.190.20">
    <property type="entry name" value="Mur ligase, C-terminal domain"/>
    <property type="match status" value="1"/>
</dbReference>
<dbReference type="Gene3D" id="3.40.1190.10">
    <property type="entry name" value="Mur-like, catalytic domain"/>
    <property type="match status" value="1"/>
</dbReference>
<dbReference type="Gene3D" id="3.40.1390.10">
    <property type="entry name" value="MurE/MurF, N-terminal domain"/>
    <property type="match status" value="1"/>
</dbReference>
<dbReference type="HAMAP" id="MF_00208">
    <property type="entry name" value="MurE"/>
    <property type="match status" value="1"/>
</dbReference>
<dbReference type="InterPro" id="IPR036565">
    <property type="entry name" value="Mur-like_cat_sf"/>
</dbReference>
<dbReference type="InterPro" id="IPR004101">
    <property type="entry name" value="Mur_ligase_C"/>
</dbReference>
<dbReference type="InterPro" id="IPR036615">
    <property type="entry name" value="Mur_ligase_C_dom_sf"/>
</dbReference>
<dbReference type="InterPro" id="IPR013221">
    <property type="entry name" value="Mur_ligase_cen"/>
</dbReference>
<dbReference type="InterPro" id="IPR035911">
    <property type="entry name" value="MurE/MurF_N"/>
</dbReference>
<dbReference type="InterPro" id="IPR005761">
    <property type="entry name" value="UDP-N-AcMur-Glu-dNH2Pim_ligase"/>
</dbReference>
<dbReference type="NCBIfam" id="TIGR01085">
    <property type="entry name" value="murE"/>
    <property type="match status" value="1"/>
</dbReference>
<dbReference type="NCBIfam" id="NF001126">
    <property type="entry name" value="PRK00139.1-4"/>
    <property type="match status" value="1"/>
</dbReference>
<dbReference type="PANTHER" id="PTHR23135">
    <property type="entry name" value="MUR LIGASE FAMILY MEMBER"/>
    <property type="match status" value="1"/>
</dbReference>
<dbReference type="PANTHER" id="PTHR23135:SF4">
    <property type="entry name" value="UDP-N-ACETYLMURAMOYL-L-ALANYL-D-GLUTAMATE--2,6-DIAMINOPIMELATE LIGASE MURE HOMOLOG, CHLOROPLASTIC"/>
    <property type="match status" value="1"/>
</dbReference>
<dbReference type="Pfam" id="PF02875">
    <property type="entry name" value="Mur_ligase_C"/>
    <property type="match status" value="1"/>
</dbReference>
<dbReference type="Pfam" id="PF08245">
    <property type="entry name" value="Mur_ligase_M"/>
    <property type="match status" value="1"/>
</dbReference>
<dbReference type="SUPFAM" id="SSF53623">
    <property type="entry name" value="MurD-like peptide ligases, catalytic domain"/>
    <property type="match status" value="1"/>
</dbReference>
<dbReference type="SUPFAM" id="SSF53244">
    <property type="entry name" value="MurD-like peptide ligases, peptide-binding domain"/>
    <property type="match status" value="1"/>
</dbReference>
<dbReference type="SUPFAM" id="SSF63418">
    <property type="entry name" value="MurE/MurF N-terminal domain"/>
    <property type="match status" value="1"/>
</dbReference>
<gene>
    <name evidence="1" type="primary">murE</name>
    <name type="ordered locus">AM282</name>
</gene>
<comment type="function">
    <text evidence="1">Catalyzes the addition of meso-diaminopimelic acid to the nucleotide precursor UDP-N-acetylmuramoyl-L-alanyl-D-glutamate (UMAG) in the biosynthesis of bacterial cell-wall peptidoglycan.</text>
</comment>
<comment type="catalytic activity">
    <reaction evidence="1">
        <text>UDP-N-acetyl-alpha-D-muramoyl-L-alanyl-D-glutamate + meso-2,6-diaminopimelate + ATP = UDP-N-acetyl-alpha-D-muramoyl-L-alanyl-gamma-D-glutamyl-meso-2,6-diaminopimelate + ADP + phosphate + H(+)</text>
        <dbReference type="Rhea" id="RHEA:23676"/>
        <dbReference type="ChEBI" id="CHEBI:15378"/>
        <dbReference type="ChEBI" id="CHEBI:30616"/>
        <dbReference type="ChEBI" id="CHEBI:43474"/>
        <dbReference type="ChEBI" id="CHEBI:57791"/>
        <dbReference type="ChEBI" id="CHEBI:83900"/>
        <dbReference type="ChEBI" id="CHEBI:83905"/>
        <dbReference type="ChEBI" id="CHEBI:456216"/>
        <dbReference type="EC" id="6.3.2.13"/>
    </reaction>
</comment>
<comment type="cofactor">
    <cofactor evidence="1">
        <name>Mg(2+)</name>
        <dbReference type="ChEBI" id="CHEBI:18420"/>
    </cofactor>
</comment>
<comment type="pathway">
    <text evidence="1">Cell wall biogenesis; peptidoglycan biosynthesis.</text>
</comment>
<comment type="subcellular location">
    <subcellularLocation>
        <location evidence="1">Cytoplasm</location>
    </subcellularLocation>
</comment>
<comment type="PTM">
    <text evidence="1">Carboxylation is probably crucial for Mg(2+) binding and, consequently, for the gamma-phosphate positioning of ATP.</text>
</comment>
<comment type="similarity">
    <text evidence="1">Belongs to the MurCDEF family. MurE subfamily.</text>
</comment>
<protein>
    <recommendedName>
        <fullName evidence="1">UDP-N-acetylmuramoyl-L-alanyl-D-glutamate--2,6-diaminopimelate ligase</fullName>
        <ecNumber evidence="1">6.3.2.13</ecNumber>
    </recommendedName>
    <alternativeName>
        <fullName evidence="1">Meso-A2pm-adding enzyme</fullName>
    </alternativeName>
    <alternativeName>
        <fullName evidence="1">Meso-diaminopimelate-adding enzyme</fullName>
    </alternativeName>
    <alternativeName>
        <fullName evidence="1">UDP-MurNAc-L-Ala-D-Glu:meso-diaminopimelate ligase</fullName>
    </alternativeName>
    <alternativeName>
        <fullName evidence="1">UDP-MurNAc-tripeptide synthetase</fullName>
    </alternativeName>
    <alternativeName>
        <fullName evidence="1">UDP-N-acetylmuramyl-tripeptide synthetase</fullName>
    </alternativeName>
</protein>
<organism>
    <name type="scientific">Anaplasma marginale (strain St. Maries)</name>
    <dbReference type="NCBI Taxonomy" id="234826"/>
    <lineage>
        <taxon>Bacteria</taxon>
        <taxon>Pseudomonadati</taxon>
        <taxon>Pseudomonadota</taxon>
        <taxon>Alphaproteobacteria</taxon>
        <taxon>Rickettsiales</taxon>
        <taxon>Anaplasmataceae</taxon>
        <taxon>Anaplasma</taxon>
    </lineage>
</organism>
<accession>Q5PBF1</accession>
<feature type="chain" id="PRO_1000012334" description="UDP-N-acetylmuramoyl-L-alanyl-D-glutamate--2,6-diaminopimelate ligase">
    <location>
        <begin position="1"/>
        <end position="472"/>
    </location>
</feature>
<feature type="short sequence motif" description="Meso-diaminopimelate recognition motif">
    <location>
        <begin position="391"/>
        <end position="394"/>
    </location>
</feature>
<feature type="binding site" evidence="1">
    <location>
        <position position="21"/>
    </location>
    <ligand>
        <name>UDP-N-acetyl-alpha-D-muramoyl-L-alanyl-D-glutamate</name>
        <dbReference type="ChEBI" id="CHEBI:83900"/>
    </ligand>
</feature>
<feature type="binding site" evidence="1">
    <location>
        <begin position="99"/>
        <end position="105"/>
    </location>
    <ligand>
        <name>ATP</name>
        <dbReference type="ChEBI" id="CHEBI:30616"/>
    </ligand>
</feature>
<feature type="binding site" evidence="1">
    <location>
        <begin position="143"/>
        <end position="144"/>
    </location>
    <ligand>
        <name>UDP-N-acetyl-alpha-D-muramoyl-L-alanyl-D-glutamate</name>
        <dbReference type="ChEBI" id="CHEBI:83900"/>
    </ligand>
</feature>
<feature type="binding site" evidence="1">
    <location>
        <position position="170"/>
    </location>
    <ligand>
        <name>UDP-N-acetyl-alpha-D-muramoyl-L-alanyl-D-glutamate</name>
        <dbReference type="ChEBI" id="CHEBI:83900"/>
    </ligand>
</feature>
<feature type="binding site" evidence="1">
    <location>
        <position position="176"/>
    </location>
    <ligand>
        <name>UDP-N-acetyl-alpha-D-muramoyl-L-alanyl-D-glutamate</name>
        <dbReference type="ChEBI" id="CHEBI:83900"/>
    </ligand>
</feature>
<feature type="binding site" evidence="1">
    <location>
        <position position="178"/>
    </location>
    <ligand>
        <name>UDP-N-acetyl-alpha-D-muramoyl-L-alanyl-D-glutamate</name>
        <dbReference type="ChEBI" id="CHEBI:83900"/>
    </ligand>
</feature>
<feature type="binding site" evidence="1">
    <location>
        <position position="367"/>
    </location>
    <ligand>
        <name>meso-2,6-diaminopimelate</name>
        <dbReference type="ChEBI" id="CHEBI:57791"/>
    </ligand>
</feature>
<feature type="binding site" evidence="1">
    <location>
        <begin position="391"/>
        <end position="394"/>
    </location>
    <ligand>
        <name>meso-2,6-diaminopimelate</name>
        <dbReference type="ChEBI" id="CHEBI:57791"/>
    </ligand>
</feature>
<feature type="binding site" evidence="1">
    <location>
        <position position="440"/>
    </location>
    <ligand>
        <name>meso-2,6-diaminopimelate</name>
        <dbReference type="ChEBI" id="CHEBI:57791"/>
    </ligand>
</feature>
<feature type="binding site" evidence="1">
    <location>
        <position position="444"/>
    </location>
    <ligand>
        <name>meso-2,6-diaminopimelate</name>
        <dbReference type="ChEBI" id="CHEBI:57791"/>
    </ligand>
</feature>
<feature type="modified residue" description="N6-carboxylysine" evidence="1">
    <location>
        <position position="210"/>
    </location>
</feature>